<protein>
    <recommendedName>
        <fullName evidence="1">3-hydroxyacyl-[acyl-carrier-protein] dehydratase FabZ</fullName>
        <ecNumber evidence="1">4.2.1.59</ecNumber>
    </recommendedName>
    <alternativeName>
        <fullName evidence="1">(3R)-hydroxymyristoyl-[acyl-carrier-protein] dehydratase</fullName>
        <shortName evidence="1">(3R)-hydroxymyristoyl-ACP dehydrase</shortName>
    </alternativeName>
    <alternativeName>
        <fullName evidence="1">Beta-hydroxyacyl-ACP dehydratase</fullName>
    </alternativeName>
</protein>
<accession>C0RJC1</accession>
<reference key="1">
    <citation type="submission" date="2009-03" db="EMBL/GenBank/DDBJ databases">
        <title>Brucella melitensis ATCC 23457 whole genome shotgun sequencing project.</title>
        <authorList>
            <person name="Setubal J.C."/>
            <person name="Boyle S."/>
            <person name="Crasta O.R."/>
            <person name="Gillespie J.J."/>
            <person name="Kenyon R.W."/>
            <person name="Lu J."/>
            <person name="Mane S."/>
            <person name="Nagrani S."/>
            <person name="Shallom J.M."/>
            <person name="Shallom S."/>
            <person name="Shukla M."/>
            <person name="Snyder E.E."/>
            <person name="Sobral B.W."/>
            <person name="Wattam A.R."/>
            <person name="Will R."/>
            <person name="Williams K."/>
            <person name="Yoo H."/>
            <person name="Munk C."/>
            <person name="Tapia R."/>
            <person name="Han C."/>
            <person name="Detter J.C."/>
            <person name="Bruce D."/>
            <person name="Brettin T.S."/>
        </authorList>
    </citation>
    <scope>NUCLEOTIDE SEQUENCE [LARGE SCALE GENOMIC DNA]</scope>
    <source>
        <strain>ATCC 23457</strain>
    </source>
</reference>
<feature type="chain" id="PRO_1000134689" description="3-hydroxyacyl-[acyl-carrier-protein] dehydratase FabZ">
    <location>
        <begin position="1"/>
        <end position="157"/>
    </location>
</feature>
<feature type="active site" evidence="1">
    <location>
        <position position="58"/>
    </location>
</feature>
<name>FABZ_BRUMB</name>
<sequence length="157" mass="17187">MSDDNQTKLEAADIQALLAVLPHRYPFLLIDRIVDIDGDVSATGIKNVTINEPHFTGHFPENPIMPGVLIVEAMAQTAGAISLLQRKTGRPGVVYFMTIDSAKFRRPVVPGDRLLLYVKKIKQRANISKYECVAEVDGVKVAEAEVAAMISVADENL</sequence>
<gene>
    <name evidence="1" type="primary">fabZ</name>
    <name type="ordered locus">BMEA_A1196</name>
</gene>
<keyword id="KW-0963">Cytoplasm</keyword>
<keyword id="KW-0441">Lipid A biosynthesis</keyword>
<keyword id="KW-0444">Lipid biosynthesis</keyword>
<keyword id="KW-0443">Lipid metabolism</keyword>
<keyword id="KW-0456">Lyase</keyword>
<dbReference type="EC" id="4.2.1.59" evidence="1"/>
<dbReference type="EMBL" id="CP001488">
    <property type="protein sequence ID" value="ACO00929.1"/>
    <property type="molecule type" value="Genomic_DNA"/>
</dbReference>
<dbReference type="RefSeq" id="WP_004683864.1">
    <property type="nucleotide sequence ID" value="NC_012441.1"/>
</dbReference>
<dbReference type="SMR" id="C0RJC1"/>
<dbReference type="GeneID" id="29593646"/>
<dbReference type="KEGG" id="bmi:BMEA_A1196"/>
<dbReference type="HOGENOM" id="CLU_078912_1_2_5"/>
<dbReference type="Proteomes" id="UP000001748">
    <property type="component" value="Chromosome I"/>
</dbReference>
<dbReference type="GO" id="GO:0005737">
    <property type="term" value="C:cytoplasm"/>
    <property type="evidence" value="ECO:0007669"/>
    <property type="project" value="UniProtKB-SubCell"/>
</dbReference>
<dbReference type="GO" id="GO:0016020">
    <property type="term" value="C:membrane"/>
    <property type="evidence" value="ECO:0007669"/>
    <property type="project" value="GOC"/>
</dbReference>
<dbReference type="GO" id="GO:0019171">
    <property type="term" value="F:(3R)-hydroxyacyl-[acyl-carrier-protein] dehydratase activity"/>
    <property type="evidence" value="ECO:0007669"/>
    <property type="project" value="UniProtKB-EC"/>
</dbReference>
<dbReference type="GO" id="GO:0006633">
    <property type="term" value="P:fatty acid biosynthetic process"/>
    <property type="evidence" value="ECO:0007669"/>
    <property type="project" value="UniProtKB-UniRule"/>
</dbReference>
<dbReference type="GO" id="GO:0009245">
    <property type="term" value="P:lipid A biosynthetic process"/>
    <property type="evidence" value="ECO:0007669"/>
    <property type="project" value="UniProtKB-UniRule"/>
</dbReference>
<dbReference type="CDD" id="cd01288">
    <property type="entry name" value="FabZ"/>
    <property type="match status" value="1"/>
</dbReference>
<dbReference type="FunFam" id="3.10.129.10:FF:000001">
    <property type="entry name" value="3-hydroxyacyl-[acyl-carrier-protein] dehydratase FabZ"/>
    <property type="match status" value="1"/>
</dbReference>
<dbReference type="Gene3D" id="3.10.129.10">
    <property type="entry name" value="Hotdog Thioesterase"/>
    <property type="match status" value="1"/>
</dbReference>
<dbReference type="HAMAP" id="MF_00406">
    <property type="entry name" value="FabZ"/>
    <property type="match status" value="1"/>
</dbReference>
<dbReference type="InterPro" id="IPR013114">
    <property type="entry name" value="FabA_FabZ"/>
</dbReference>
<dbReference type="InterPro" id="IPR010084">
    <property type="entry name" value="FabZ"/>
</dbReference>
<dbReference type="InterPro" id="IPR029069">
    <property type="entry name" value="HotDog_dom_sf"/>
</dbReference>
<dbReference type="NCBIfam" id="TIGR01750">
    <property type="entry name" value="fabZ"/>
    <property type="match status" value="1"/>
</dbReference>
<dbReference type="NCBIfam" id="NF000582">
    <property type="entry name" value="PRK00006.1"/>
    <property type="match status" value="1"/>
</dbReference>
<dbReference type="PANTHER" id="PTHR30272">
    <property type="entry name" value="3-HYDROXYACYL-[ACYL-CARRIER-PROTEIN] DEHYDRATASE"/>
    <property type="match status" value="1"/>
</dbReference>
<dbReference type="PANTHER" id="PTHR30272:SF1">
    <property type="entry name" value="3-HYDROXYACYL-[ACYL-CARRIER-PROTEIN] DEHYDRATASE"/>
    <property type="match status" value="1"/>
</dbReference>
<dbReference type="Pfam" id="PF07977">
    <property type="entry name" value="FabA"/>
    <property type="match status" value="1"/>
</dbReference>
<dbReference type="SUPFAM" id="SSF54637">
    <property type="entry name" value="Thioesterase/thiol ester dehydrase-isomerase"/>
    <property type="match status" value="1"/>
</dbReference>
<evidence type="ECO:0000255" key="1">
    <source>
        <dbReference type="HAMAP-Rule" id="MF_00406"/>
    </source>
</evidence>
<comment type="function">
    <text evidence="1">Involved in unsaturated fatty acids biosynthesis. Catalyzes the dehydration of short chain beta-hydroxyacyl-ACPs and long chain saturated and unsaturated beta-hydroxyacyl-ACPs.</text>
</comment>
<comment type="catalytic activity">
    <reaction evidence="1">
        <text>a (3R)-hydroxyacyl-[ACP] = a (2E)-enoyl-[ACP] + H2O</text>
        <dbReference type="Rhea" id="RHEA:13097"/>
        <dbReference type="Rhea" id="RHEA-COMP:9925"/>
        <dbReference type="Rhea" id="RHEA-COMP:9945"/>
        <dbReference type="ChEBI" id="CHEBI:15377"/>
        <dbReference type="ChEBI" id="CHEBI:78784"/>
        <dbReference type="ChEBI" id="CHEBI:78827"/>
        <dbReference type="EC" id="4.2.1.59"/>
    </reaction>
</comment>
<comment type="subcellular location">
    <subcellularLocation>
        <location evidence="1">Cytoplasm</location>
    </subcellularLocation>
</comment>
<comment type="similarity">
    <text evidence="1">Belongs to the thioester dehydratase family. FabZ subfamily.</text>
</comment>
<organism>
    <name type="scientific">Brucella melitensis biotype 2 (strain ATCC 23457)</name>
    <dbReference type="NCBI Taxonomy" id="546272"/>
    <lineage>
        <taxon>Bacteria</taxon>
        <taxon>Pseudomonadati</taxon>
        <taxon>Pseudomonadota</taxon>
        <taxon>Alphaproteobacteria</taxon>
        <taxon>Hyphomicrobiales</taxon>
        <taxon>Brucellaceae</taxon>
        <taxon>Brucella/Ochrobactrum group</taxon>
        <taxon>Brucella</taxon>
    </lineage>
</organism>
<proteinExistence type="inferred from homology"/>